<reference key="1">
    <citation type="submission" date="2006-02" db="EMBL/GenBank/DDBJ databases">
        <title>Complete sequence of chromosome of Jannaschia sp. CCS1.</title>
        <authorList>
            <consortium name="US DOE Joint Genome Institute"/>
            <person name="Copeland A."/>
            <person name="Lucas S."/>
            <person name="Lapidus A."/>
            <person name="Barry K."/>
            <person name="Detter J.C."/>
            <person name="Glavina del Rio T."/>
            <person name="Hammon N."/>
            <person name="Israni S."/>
            <person name="Pitluck S."/>
            <person name="Brettin T."/>
            <person name="Bruce D."/>
            <person name="Han C."/>
            <person name="Tapia R."/>
            <person name="Gilna P."/>
            <person name="Chertkov O."/>
            <person name="Saunders E."/>
            <person name="Schmutz J."/>
            <person name="Larimer F."/>
            <person name="Land M."/>
            <person name="Kyrpides N."/>
            <person name="Lykidis A."/>
            <person name="Moran M.A."/>
            <person name="Belas R."/>
            <person name="Ye W."/>
            <person name="Buchan A."/>
            <person name="Gonzalez J.M."/>
            <person name="Schell M.A."/>
            <person name="Richardson P."/>
        </authorList>
    </citation>
    <scope>NUCLEOTIDE SEQUENCE [LARGE SCALE GENOMIC DNA]</scope>
    <source>
        <strain>CCS1</strain>
    </source>
</reference>
<sequence>MNYLDFEKPLAEIEGKAEELRAMARREEGMDVEEQAAALDKKAADLLRTLYADLTPWRKCQVARHAQRPHCQDYIDALFTEYTPLAGDRNFADDHAIMGGLARFDDTPVVVIGHEKGHDTKTRIERNFGMARPEGYRKAVRLMDLADRFNLPVITLVDTPGAYPGKGAEERGQSEAIARSTEKCLQIGVPLISVIIGEGGSGGAVAFATADRLAMLEHSVYSVISPEGCASILWKDAEKMREAAEALRLTAQDLHKLGVCDVVINEPLGGAQRNKDAAIESVGKAIASMLAGFGDADRATLIAGRRKKFLDLGSKGLAA</sequence>
<evidence type="ECO:0000255" key="1">
    <source>
        <dbReference type="HAMAP-Rule" id="MF_00823"/>
    </source>
</evidence>
<evidence type="ECO:0000255" key="2">
    <source>
        <dbReference type="PROSITE-ProRule" id="PRU01137"/>
    </source>
</evidence>
<organism>
    <name type="scientific">Jannaschia sp. (strain CCS1)</name>
    <dbReference type="NCBI Taxonomy" id="290400"/>
    <lineage>
        <taxon>Bacteria</taxon>
        <taxon>Pseudomonadati</taxon>
        <taxon>Pseudomonadota</taxon>
        <taxon>Alphaproteobacteria</taxon>
        <taxon>Rhodobacterales</taxon>
        <taxon>Roseobacteraceae</taxon>
        <taxon>Jannaschia</taxon>
    </lineage>
</organism>
<gene>
    <name evidence="1" type="primary">accA</name>
    <name type="ordered locus">Jann_0473</name>
</gene>
<comment type="function">
    <text evidence="1">Component of the acetyl coenzyme A carboxylase (ACC) complex. First, biotin carboxylase catalyzes the carboxylation of biotin on its carrier protein (BCCP) and then the CO(2) group is transferred by the carboxyltransferase to acetyl-CoA to form malonyl-CoA.</text>
</comment>
<comment type="catalytic activity">
    <reaction evidence="1">
        <text>N(6)-carboxybiotinyl-L-lysyl-[protein] + acetyl-CoA = N(6)-biotinyl-L-lysyl-[protein] + malonyl-CoA</text>
        <dbReference type="Rhea" id="RHEA:54728"/>
        <dbReference type="Rhea" id="RHEA-COMP:10505"/>
        <dbReference type="Rhea" id="RHEA-COMP:10506"/>
        <dbReference type="ChEBI" id="CHEBI:57288"/>
        <dbReference type="ChEBI" id="CHEBI:57384"/>
        <dbReference type="ChEBI" id="CHEBI:83144"/>
        <dbReference type="ChEBI" id="CHEBI:83145"/>
        <dbReference type="EC" id="2.1.3.15"/>
    </reaction>
</comment>
<comment type="pathway">
    <text evidence="1">Lipid metabolism; malonyl-CoA biosynthesis; malonyl-CoA from acetyl-CoA: step 1/1.</text>
</comment>
<comment type="subunit">
    <text evidence="1">Acetyl-CoA carboxylase is a heterohexamer composed of biotin carboxyl carrier protein (AccB), biotin carboxylase (AccC) and two subunits each of ACCase subunit alpha (AccA) and ACCase subunit beta (AccD).</text>
</comment>
<comment type="subcellular location">
    <subcellularLocation>
        <location evidence="1">Cytoplasm</location>
    </subcellularLocation>
</comment>
<comment type="similarity">
    <text evidence="1">Belongs to the AccA family.</text>
</comment>
<proteinExistence type="inferred from homology"/>
<feature type="chain" id="PRO_1000062632" description="Acetyl-coenzyme A carboxylase carboxyl transferase subunit alpha">
    <location>
        <begin position="1"/>
        <end position="319"/>
    </location>
</feature>
<feature type="domain" description="CoA carboxyltransferase C-terminal" evidence="2">
    <location>
        <begin position="38"/>
        <end position="292"/>
    </location>
</feature>
<name>ACCA_JANSC</name>
<protein>
    <recommendedName>
        <fullName evidence="1">Acetyl-coenzyme A carboxylase carboxyl transferase subunit alpha</fullName>
        <shortName evidence="1">ACCase subunit alpha</shortName>
        <shortName evidence="1">Acetyl-CoA carboxylase carboxyltransferase subunit alpha</shortName>
        <ecNumber evidence="1">2.1.3.15</ecNumber>
    </recommendedName>
</protein>
<accession>Q28V72</accession>
<keyword id="KW-0067">ATP-binding</keyword>
<keyword id="KW-0963">Cytoplasm</keyword>
<keyword id="KW-0275">Fatty acid biosynthesis</keyword>
<keyword id="KW-0276">Fatty acid metabolism</keyword>
<keyword id="KW-0444">Lipid biosynthesis</keyword>
<keyword id="KW-0443">Lipid metabolism</keyword>
<keyword id="KW-0547">Nucleotide-binding</keyword>
<keyword id="KW-1185">Reference proteome</keyword>
<keyword id="KW-0808">Transferase</keyword>
<dbReference type="EC" id="2.1.3.15" evidence="1"/>
<dbReference type="EMBL" id="CP000264">
    <property type="protein sequence ID" value="ABD53390.1"/>
    <property type="molecule type" value="Genomic_DNA"/>
</dbReference>
<dbReference type="RefSeq" id="WP_011453599.1">
    <property type="nucleotide sequence ID" value="NC_007802.1"/>
</dbReference>
<dbReference type="SMR" id="Q28V72"/>
<dbReference type="STRING" id="290400.Jann_0473"/>
<dbReference type="KEGG" id="jan:Jann_0473"/>
<dbReference type="eggNOG" id="COG0825">
    <property type="taxonomic scope" value="Bacteria"/>
</dbReference>
<dbReference type="HOGENOM" id="CLU_015486_0_2_5"/>
<dbReference type="OrthoDB" id="9808023at2"/>
<dbReference type="UniPathway" id="UPA00655">
    <property type="reaction ID" value="UER00711"/>
</dbReference>
<dbReference type="Proteomes" id="UP000008326">
    <property type="component" value="Chromosome"/>
</dbReference>
<dbReference type="GO" id="GO:0009317">
    <property type="term" value="C:acetyl-CoA carboxylase complex"/>
    <property type="evidence" value="ECO:0007669"/>
    <property type="project" value="InterPro"/>
</dbReference>
<dbReference type="GO" id="GO:0003989">
    <property type="term" value="F:acetyl-CoA carboxylase activity"/>
    <property type="evidence" value="ECO:0007669"/>
    <property type="project" value="InterPro"/>
</dbReference>
<dbReference type="GO" id="GO:0005524">
    <property type="term" value="F:ATP binding"/>
    <property type="evidence" value="ECO:0007669"/>
    <property type="project" value="UniProtKB-KW"/>
</dbReference>
<dbReference type="GO" id="GO:0016743">
    <property type="term" value="F:carboxyl- or carbamoyltransferase activity"/>
    <property type="evidence" value="ECO:0007669"/>
    <property type="project" value="UniProtKB-UniRule"/>
</dbReference>
<dbReference type="GO" id="GO:0006633">
    <property type="term" value="P:fatty acid biosynthetic process"/>
    <property type="evidence" value="ECO:0007669"/>
    <property type="project" value="UniProtKB-KW"/>
</dbReference>
<dbReference type="GO" id="GO:2001295">
    <property type="term" value="P:malonyl-CoA biosynthetic process"/>
    <property type="evidence" value="ECO:0007669"/>
    <property type="project" value="UniProtKB-UniRule"/>
</dbReference>
<dbReference type="Gene3D" id="3.90.226.10">
    <property type="entry name" value="2-enoyl-CoA Hydratase, Chain A, domain 1"/>
    <property type="match status" value="1"/>
</dbReference>
<dbReference type="HAMAP" id="MF_00823">
    <property type="entry name" value="AcetylCoA_CT_alpha"/>
    <property type="match status" value="1"/>
</dbReference>
<dbReference type="InterPro" id="IPR001095">
    <property type="entry name" value="Acetyl_CoA_COase_a_su"/>
</dbReference>
<dbReference type="InterPro" id="IPR029045">
    <property type="entry name" value="ClpP/crotonase-like_dom_sf"/>
</dbReference>
<dbReference type="InterPro" id="IPR011763">
    <property type="entry name" value="COA_CT_C"/>
</dbReference>
<dbReference type="NCBIfam" id="TIGR00513">
    <property type="entry name" value="accA"/>
    <property type="match status" value="1"/>
</dbReference>
<dbReference type="NCBIfam" id="NF041504">
    <property type="entry name" value="AccA_sub"/>
    <property type="match status" value="1"/>
</dbReference>
<dbReference type="NCBIfam" id="NF004344">
    <property type="entry name" value="PRK05724.1"/>
    <property type="match status" value="1"/>
</dbReference>
<dbReference type="PANTHER" id="PTHR42853">
    <property type="entry name" value="ACETYL-COENZYME A CARBOXYLASE CARBOXYL TRANSFERASE SUBUNIT ALPHA"/>
    <property type="match status" value="1"/>
</dbReference>
<dbReference type="PANTHER" id="PTHR42853:SF3">
    <property type="entry name" value="ACETYL-COENZYME A CARBOXYLASE CARBOXYL TRANSFERASE SUBUNIT ALPHA, CHLOROPLASTIC"/>
    <property type="match status" value="1"/>
</dbReference>
<dbReference type="Pfam" id="PF03255">
    <property type="entry name" value="ACCA"/>
    <property type="match status" value="1"/>
</dbReference>
<dbReference type="PRINTS" id="PR01069">
    <property type="entry name" value="ACCCTRFRASEA"/>
</dbReference>
<dbReference type="SUPFAM" id="SSF52096">
    <property type="entry name" value="ClpP/crotonase"/>
    <property type="match status" value="1"/>
</dbReference>
<dbReference type="PROSITE" id="PS50989">
    <property type="entry name" value="COA_CT_CTER"/>
    <property type="match status" value="1"/>
</dbReference>